<comment type="function">
    <text evidence="2">Interconverts simultaneously and stereospecifically pyruvate and lactate with concomitant interconversion of NADH and NAD(+).</text>
</comment>
<comment type="catalytic activity">
    <reaction evidence="2">
        <text>(S)-lactate + NAD(+) = pyruvate + NADH + H(+)</text>
        <dbReference type="Rhea" id="RHEA:23444"/>
        <dbReference type="ChEBI" id="CHEBI:15361"/>
        <dbReference type="ChEBI" id="CHEBI:15378"/>
        <dbReference type="ChEBI" id="CHEBI:16651"/>
        <dbReference type="ChEBI" id="CHEBI:57540"/>
        <dbReference type="ChEBI" id="CHEBI:57945"/>
        <dbReference type="EC" id="1.1.1.27"/>
    </reaction>
    <physiologicalReaction direction="left-to-right" evidence="2">
        <dbReference type="Rhea" id="RHEA:23445"/>
    </physiologicalReaction>
    <physiologicalReaction direction="right-to-left" evidence="2">
        <dbReference type="Rhea" id="RHEA:23446"/>
    </physiologicalReaction>
</comment>
<comment type="pathway">
    <text evidence="2">Fermentation; pyruvate fermentation to lactate; (S)-lactate from pyruvate: step 1/1.</text>
</comment>
<comment type="subunit">
    <text evidence="1">Homotetramer.</text>
</comment>
<comment type="subcellular location">
    <subcellularLocation>
        <location evidence="1">Cytoplasm</location>
    </subcellularLocation>
</comment>
<comment type="similarity">
    <text evidence="3">Belongs to the LDH/MDH superfamily. LDH family.</text>
</comment>
<reference key="1">
    <citation type="journal article" date="2001" name="Gene">
        <title>Lactate dehydrogenase genes of caiman and Chinese soft-shelled turtle, with emphasis on the molecular phylogenetics and evolution of reptiles.</title>
        <authorList>
            <person name="Liao C.-H."/>
            <person name="Ho W.-Z."/>
            <person name="Huang H.-W."/>
            <person name="Kuo C.-H."/>
            <person name="Lee S.-C."/>
            <person name="Li S.S.-L."/>
        </authorList>
    </citation>
    <scope>NUCLEOTIDE SEQUENCE [MRNA]</scope>
    <source>
        <tissue>Heart</tissue>
    </source>
</reference>
<gene>
    <name type="primary">LDHB</name>
</gene>
<accession>Q98SL1</accession>
<feature type="initiator methionine" description="Removed" evidence="1">
    <location>
        <position position="1"/>
    </location>
</feature>
<feature type="chain" id="PRO_0000168469" description="L-lactate dehydrogenase B chain">
    <location>
        <begin position="2"/>
        <end position="333"/>
    </location>
</feature>
<feature type="active site" description="Proton acceptor" evidence="1">
    <location>
        <position position="193"/>
    </location>
</feature>
<feature type="binding site" evidence="1">
    <location>
        <begin position="29"/>
        <end position="57"/>
    </location>
    <ligand>
        <name>NAD(+)</name>
        <dbReference type="ChEBI" id="CHEBI:57540"/>
    </ligand>
</feature>
<feature type="binding site" evidence="1">
    <location>
        <position position="99"/>
    </location>
    <ligand>
        <name>NAD(+)</name>
        <dbReference type="ChEBI" id="CHEBI:57540"/>
    </ligand>
</feature>
<feature type="binding site" evidence="1">
    <location>
        <position position="106"/>
    </location>
    <ligand>
        <name>substrate</name>
    </ligand>
</feature>
<feature type="binding site" evidence="1">
    <location>
        <position position="138"/>
    </location>
    <ligand>
        <name>NAD(+)</name>
        <dbReference type="ChEBI" id="CHEBI:57540"/>
    </ligand>
</feature>
<feature type="binding site" evidence="1">
    <location>
        <position position="138"/>
    </location>
    <ligand>
        <name>substrate</name>
    </ligand>
</feature>
<feature type="binding site" evidence="1">
    <location>
        <position position="169"/>
    </location>
    <ligand>
        <name>substrate</name>
    </ligand>
</feature>
<feature type="binding site" evidence="1">
    <location>
        <position position="248"/>
    </location>
    <ligand>
        <name>substrate</name>
    </ligand>
</feature>
<proteinExistence type="evidence at transcript level"/>
<sequence length="333" mass="36553">MATLKEKLITHIASESTIPNNKVTVVGVGQVGMACAVSILGKSLCDELALVDVLEDKLKGEMMDLQHGSLFLQTHKIVADKDYAVTANSKIVVVTAGVRQQEGESRLNLVQRNVNVFKFIIPQIIKYSPDCIILVVSNPVDILTYVTWKLSGLPKHRVIGSGCNLDSARFRYLMSEKLGIHPSSCHGWILGEHGDSSVAVWSGVNVAGVSLQELNPAMGTDRDSEKWKEVHKQVVESAYEVIKLKGYTNWAIGFSVADLLETMMKNLNRVQPVSTMVKGMYGIENEVFLSLPCVLSASGLTSVINQKLKDDEVAQLRSSADTLWSIQKDLKDL</sequence>
<keyword id="KW-0963">Cytoplasm</keyword>
<keyword id="KW-0520">NAD</keyword>
<keyword id="KW-0560">Oxidoreductase</keyword>
<evidence type="ECO:0000250" key="1"/>
<evidence type="ECO:0000250" key="2">
    <source>
        <dbReference type="UniProtKB" id="P07195"/>
    </source>
</evidence>
<evidence type="ECO:0000305" key="3"/>
<dbReference type="EC" id="1.1.1.27" evidence="2"/>
<dbReference type="EMBL" id="AF363793">
    <property type="protein sequence ID" value="AAK37571.1"/>
    <property type="molecule type" value="mRNA"/>
</dbReference>
<dbReference type="SMR" id="Q98SL1"/>
<dbReference type="UniPathway" id="UPA00554">
    <property type="reaction ID" value="UER00611"/>
</dbReference>
<dbReference type="GO" id="GO:0005737">
    <property type="term" value="C:cytoplasm"/>
    <property type="evidence" value="ECO:0007669"/>
    <property type="project" value="UniProtKB-SubCell"/>
</dbReference>
<dbReference type="GO" id="GO:0004459">
    <property type="term" value="F:L-lactate dehydrogenase activity"/>
    <property type="evidence" value="ECO:0007669"/>
    <property type="project" value="UniProtKB-EC"/>
</dbReference>
<dbReference type="GO" id="GO:0006089">
    <property type="term" value="P:lactate metabolic process"/>
    <property type="evidence" value="ECO:0007669"/>
    <property type="project" value="TreeGrafter"/>
</dbReference>
<dbReference type="CDD" id="cd05293">
    <property type="entry name" value="LDH_1"/>
    <property type="match status" value="1"/>
</dbReference>
<dbReference type="FunFam" id="3.40.50.720:FF:000029">
    <property type="entry name" value="L-lactate dehydrogenase A chain"/>
    <property type="match status" value="1"/>
</dbReference>
<dbReference type="FunFam" id="3.90.110.10:FF:000003">
    <property type="entry name" value="L-lactate dehydrogenase A chain"/>
    <property type="match status" value="1"/>
</dbReference>
<dbReference type="Gene3D" id="3.90.110.10">
    <property type="entry name" value="Lactate dehydrogenase/glycoside hydrolase, family 4, C-terminal"/>
    <property type="match status" value="1"/>
</dbReference>
<dbReference type="Gene3D" id="3.40.50.720">
    <property type="entry name" value="NAD(P)-binding Rossmann-like Domain"/>
    <property type="match status" value="1"/>
</dbReference>
<dbReference type="HAMAP" id="MF_00488">
    <property type="entry name" value="Lactate_dehydrog"/>
    <property type="match status" value="1"/>
</dbReference>
<dbReference type="InterPro" id="IPR001557">
    <property type="entry name" value="L-lactate/malate_DH"/>
</dbReference>
<dbReference type="InterPro" id="IPR011304">
    <property type="entry name" value="L-lactate_DH"/>
</dbReference>
<dbReference type="InterPro" id="IPR018177">
    <property type="entry name" value="L-lactate_DH_AS"/>
</dbReference>
<dbReference type="InterPro" id="IPR022383">
    <property type="entry name" value="Lactate/malate_DH_C"/>
</dbReference>
<dbReference type="InterPro" id="IPR001236">
    <property type="entry name" value="Lactate/malate_DH_N"/>
</dbReference>
<dbReference type="InterPro" id="IPR015955">
    <property type="entry name" value="Lactate_DH/Glyco_Ohase_4_C"/>
</dbReference>
<dbReference type="InterPro" id="IPR036291">
    <property type="entry name" value="NAD(P)-bd_dom_sf"/>
</dbReference>
<dbReference type="NCBIfam" id="TIGR01771">
    <property type="entry name" value="L-LDH-NAD"/>
    <property type="match status" value="1"/>
</dbReference>
<dbReference type="NCBIfam" id="NF000824">
    <property type="entry name" value="PRK00066.1"/>
    <property type="match status" value="1"/>
</dbReference>
<dbReference type="PANTHER" id="PTHR43128">
    <property type="entry name" value="L-2-HYDROXYCARBOXYLATE DEHYDROGENASE (NAD(P)(+))"/>
    <property type="match status" value="1"/>
</dbReference>
<dbReference type="PANTHER" id="PTHR43128:SF2">
    <property type="entry name" value="L-LACTATE DEHYDROGENASE B CHAIN"/>
    <property type="match status" value="1"/>
</dbReference>
<dbReference type="Pfam" id="PF02866">
    <property type="entry name" value="Ldh_1_C"/>
    <property type="match status" value="1"/>
</dbReference>
<dbReference type="Pfam" id="PF00056">
    <property type="entry name" value="Ldh_1_N"/>
    <property type="match status" value="1"/>
</dbReference>
<dbReference type="PIRSF" id="PIRSF000102">
    <property type="entry name" value="Lac_mal_DH"/>
    <property type="match status" value="1"/>
</dbReference>
<dbReference type="PRINTS" id="PR00086">
    <property type="entry name" value="LLDHDRGNASE"/>
</dbReference>
<dbReference type="SUPFAM" id="SSF56327">
    <property type="entry name" value="LDH C-terminal domain-like"/>
    <property type="match status" value="1"/>
</dbReference>
<dbReference type="SUPFAM" id="SSF51735">
    <property type="entry name" value="NAD(P)-binding Rossmann-fold domains"/>
    <property type="match status" value="1"/>
</dbReference>
<dbReference type="PROSITE" id="PS00064">
    <property type="entry name" value="L_LDH"/>
    <property type="match status" value="1"/>
</dbReference>
<organism>
    <name type="scientific">Caiman crocodilus apaporiensis</name>
    <name type="common">Rio Apaporis caiman</name>
    <dbReference type="NCBI Taxonomy" id="157164"/>
    <lineage>
        <taxon>Eukaryota</taxon>
        <taxon>Metazoa</taxon>
        <taxon>Chordata</taxon>
        <taxon>Craniata</taxon>
        <taxon>Vertebrata</taxon>
        <taxon>Euteleostomi</taxon>
        <taxon>Archelosauria</taxon>
        <taxon>Archosauria</taxon>
        <taxon>Crocodylia</taxon>
        <taxon>Alligatoridae</taxon>
        <taxon>Caimaninae</taxon>
        <taxon>Caiman</taxon>
    </lineage>
</organism>
<name>LDHB_CAICA</name>
<protein>
    <recommendedName>
        <fullName>L-lactate dehydrogenase B chain</fullName>
        <shortName>LDH-B</shortName>
        <ecNumber evidence="2">1.1.1.27</ecNumber>
    </recommendedName>
</protein>